<gene>
    <name evidence="1" type="primary">RIF1</name>
</gene>
<feature type="chain" id="PRO_0000439953" description="Telomere-associated protein RIF1">
    <location>
        <begin position="1"/>
        <end position="2326"/>
    </location>
</feature>
<feature type="region of interest" description="Disordered" evidence="3">
    <location>
        <begin position="381"/>
        <end position="410"/>
    </location>
</feature>
<feature type="region of interest" description="Disordered" evidence="3">
    <location>
        <begin position="1105"/>
        <end position="1965"/>
    </location>
</feature>
<feature type="region of interest" description="Disordered" evidence="3">
    <location>
        <begin position="1993"/>
        <end position="2050"/>
    </location>
</feature>
<feature type="compositionally biased region" description="Polar residues" evidence="3">
    <location>
        <begin position="382"/>
        <end position="396"/>
    </location>
</feature>
<feature type="compositionally biased region" description="Basic and acidic residues" evidence="3">
    <location>
        <begin position="1112"/>
        <end position="1126"/>
    </location>
</feature>
<feature type="compositionally biased region" description="Basic and acidic residues" evidence="3">
    <location>
        <begin position="1150"/>
        <end position="1182"/>
    </location>
</feature>
<feature type="compositionally biased region" description="Low complexity" evidence="3">
    <location>
        <begin position="1216"/>
        <end position="1225"/>
    </location>
</feature>
<feature type="compositionally biased region" description="Polar residues" evidence="3">
    <location>
        <begin position="1233"/>
        <end position="1242"/>
    </location>
</feature>
<feature type="compositionally biased region" description="Polar residues" evidence="3">
    <location>
        <begin position="1252"/>
        <end position="1270"/>
    </location>
</feature>
<feature type="compositionally biased region" description="Basic and acidic residues" evidence="3">
    <location>
        <begin position="1290"/>
        <end position="1299"/>
    </location>
</feature>
<feature type="compositionally biased region" description="Polar residues" evidence="3">
    <location>
        <begin position="1318"/>
        <end position="1332"/>
    </location>
</feature>
<feature type="compositionally biased region" description="Polar residues" evidence="3">
    <location>
        <begin position="1341"/>
        <end position="1353"/>
    </location>
</feature>
<feature type="compositionally biased region" description="Basic and acidic residues" evidence="3">
    <location>
        <begin position="1376"/>
        <end position="1402"/>
    </location>
</feature>
<feature type="compositionally biased region" description="Polar residues" evidence="3">
    <location>
        <begin position="1403"/>
        <end position="1412"/>
    </location>
</feature>
<feature type="compositionally biased region" description="Basic and acidic residues" evidence="3">
    <location>
        <begin position="1448"/>
        <end position="1480"/>
    </location>
</feature>
<feature type="compositionally biased region" description="Basic and acidic residues" evidence="3">
    <location>
        <begin position="1489"/>
        <end position="1511"/>
    </location>
</feature>
<feature type="compositionally biased region" description="Basic and acidic residues" evidence="3">
    <location>
        <begin position="1519"/>
        <end position="1539"/>
    </location>
</feature>
<feature type="compositionally biased region" description="Polar residues" evidence="3">
    <location>
        <begin position="1564"/>
        <end position="1573"/>
    </location>
</feature>
<feature type="compositionally biased region" description="Basic residues" evidence="3">
    <location>
        <begin position="1586"/>
        <end position="1595"/>
    </location>
</feature>
<feature type="compositionally biased region" description="Basic and acidic residues" evidence="3">
    <location>
        <begin position="1596"/>
        <end position="1609"/>
    </location>
</feature>
<feature type="compositionally biased region" description="Polar residues" evidence="3">
    <location>
        <begin position="1610"/>
        <end position="1640"/>
    </location>
</feature>
<feature type="compositionally biased region" description="Polar residues" evidence="3">
    <location>
        <begin position="1671"/>
        <end position="1683"/>
    </location>
</feature>
<feature type="compositionally biased region" description="Basic and acidic residues" evidence="3">
    <location>
        <begin position="1697"/>
        <end position="1712"/>
    </location>
</feature>
<feature type="compositionally biased region" description="Polar residues" evidence="3">
    <location>
        <begin position="1713"/>
        <end position="1745"/>
    </location>
</feature>
<feature type="compositionally biased region" description="Basic and acidic residues" evidence="3">
    <location>
        <begin position="1776"/>
        <end position="1785"/>
    </location>
</feature>
<feature type="compositionally biased region" description="Polar residues" evidence="3">
    <location>
        <begin position="1795"/>
        <end position="1813"/>
    </location>
</feature>
<feature type="compositionally biased region" description="Basic and acidic residues" evidence="3">
    <location>
        <begin position="1869"/>
        <end position="1884"/>
    </location>
</feature>
<feature type="compositionally biased region" description="Basic and acidic residues" evidence="3">
    <location>
        <begin position="1908"/>
        <end position="1925"/>
    </location>
</feature>
<feature type="compositionally biased region" description="Basic and acidic residues" evidence="3">
    <location>
        <begin position="1932"/>
        <end position="1954"/>
    </location>
</feature>
<feature type="compositionally biased region" description="Polar residues" evidence="3">
    <location>
        <begin position="2009"/>
        <end position="2036"/>
    </location>
</feature>
<feature type="splice variant" id="VSP_058928" description="In isoform 2.">
    <location>
        <begin position="2102"/>
        <end position="2127"/>
    </location>
</feature>
<protein>
    <recommendedName>
        <fullName evidence="1">Telomere-associated protein RIF1</fullName>
    </recommendedName>
    <alternativeName>
        <fullName evidence="1">Rap1-interacting factor 1 homolog</fullName>
    </alternativeName>
</protein>
<reference key="1">
    <citation type="journal article" date="2004" name="Nature">
        <title>Sequence and comparative analysis of the chicken genome provide unique perspectives on vertebrate evolution.</title>
        <authorList>
            <person name="Hillier L.W."/>
            <person name="Miller W."/>
            <person name="Birney E."/>
            <person name="Warren W."/>
            <person name="Hardison R.C."/>
            <person name="Ponting C.P."/>
            <person name="Bork P."/>
            <person name="Burt D.W."/>
            <person name="Groenen M.A.M."/>
            <person name="Delany M.E."/>
            <person name="Dodgson J.B."/>
            <person name="Chinwalla A.T."/>
            <person name="Cliften P.F."/>
            <person name="Clifton S.W."/>
            <person name="Delehaunty K.D."/>
            <person name="Fronick C."/>
            <person name="Fulton R.S."/>
            <person name="Graves T.A."/>
            <person name="Kremitzki C."/>
            <person name="Layman D."/>
            <person name="Magrini V."/>
            <person name="McPherson J.D."/>
            <person name="Miner T.L."/>
            <person name="Minx P."/>
            <person name="Nash W.E."/>
            <person name="Nhan M.N."/>
            <person name="Nelson J.O."/>
            <person name="Oddy L.G."/>
            <person name="Pohl C.S."/>
            <person name="Randall-Maher J."/>
            <person name="Smith S.M."/>
            <person name="Wallis J.W."/>
            <person name="Yang S.-P."/>
            <person name="Romanov M.N."/>
            <person name="Rondelli C.M."/>
            <person name="Paton B."/>
            <person name="Smith J."/>
            <person name="Morrice D."/>
            <person name="Daniels L."/>
            <person name="Tempest H.G."/>
            <person name="Robertson L."/>
            <person name="Masabanda J.S."/>
            <person name="Griffin D.K."/>
            <person name="Vignal A."/>
            <person name="Fillon V."/>
            <person name="Jacobbson L."/>
            <person name="Kerje S."/>
            <person name="Andersson L."/>
            <person name="Crooijmans R.P."/>
            <person name="Aerts J."/>
            <person name="van der Poel J.J."/>
            <person name="Ellegren H."/>
            <person name="Caldwell R.B."/>
            <person name="Hubbard S.J."/>
            <person name="Grafham D.V."/>
            <person name="Kierzek A.M."/>
            <person name="McLaren S.R."/>
            <person name="Overton I.M."/>
            <person name="Arakawa H."/>
            <person name="Beattie K.J."/>
            <person name="Bezzubov Y."/>
            <person name="Boardman P.E."/>
            <person name="Bonfield J.K."/>
            <person name="Croning M.D.R."/>
            <person name="Davies R.M."/>
            <person name="Francis M.D."/>
            <person name="Humphray S.J."/>
            <person name="Scott C.E."/>
            <person name="Taylor R.G."/>
            <person name="Tickle C."/>
            <person name="Brown W.R.A."/>
            <person name="Rogers J."/>
            <person name="Buerstedde J.-M."/>
            <person name="Wilson S.A."/>
            <person name="Stubbs L."/>
            <person name="Ovcharenko I."/>
            <person name="Gordon L."/>
            <person name="Lucas S."/>
            <person name="Miller M.M."/>
            <person name="Inoko H."/>
            <person name="Shiina T."/>
            <person name="Kaufman J."/>
            <person name="Salomonsen J."/>
            <person name="Skjoedt K."/>
            <person name="Wong G.K.-S."/>
            <person name="Wang J."/>
            <person name="Liu B."/>
            <person name="Wang J."/>
            <person name="Yu J."/>
            <person name="Yang H."/>
            <person name="Nefedov M."/>
            <person name="Koriabine M."/>
            <person name="Dejong P.J."/>
            <person name="Goodstadt L."/>
            <person name="Webber C."/>
            <person name="Dickens N.J."/>
            <person name="Letunic I."/>
            <person name="Suyama M."/>
            <person name="Torrents D."/>
            <person name="von Mering C."/>
            <person name="Zdobnov E.M."/>
            <person name="Makova K."/>
            <person name="Nekrutenko A."/>
            <person name="Elnitski L."/>
            <person name="Eswara P."/>
            <person name="King D.C."/>
            <person name="Yang S.-P."/>
            <person name="Tyekucheva S."/>
            <person name="Radakrishnan A."/>
            <person name="Harris R.S."/>
            <person name="Chiaromonte F."/>
            <person name="Taylor J."/>
            <person name="He J."/>
            <person name="Rijnkels M."/>
            <person name="Griffiths-Jones S."/>
            <person name="Ureta-Vidal A."/>
            <person name="Hoffman M.M."/>
            <person name="Severin J."/>
            <person name="Searle S.M.J."/>
            <person name="Law A.S."/>
            <person name="Speed D."/>
            <person name="Waddington D."/>
            <person name="Cheng Z."/>
            <person name="Tuzun E."/>
            <person name="Eichler E."/>
            <person name="Bao Z."/>
            <person name="Flicek P."/>
            <person name="Shteynberg D.D."/>
            <person name="Brent M.R."/>
            <person name="Bye J.M."/>
            <person name="Huckle E.J."/>
            <person name="Chatterji S."/>
            <person name="Dewey C."/>
            <person name="Pachter L."/>
            <person name="Kouranov A."/>
            <person name="Mourelatos Z."/>
            <person name="Hatzigeorgiou A.G."/>
            <person name="Paterson A.H."/>
            <person name="Ivarie R."/>
            <person name="Brandstrom M."/>
            <person name="Axelsson E."/>
            <person name="Backstrom N."/>
            <person name="Berlin S."/>
            <person name="Webster M.T."/>
            <person name="Pourquie O."/>
            <person name="Reymond A."/>
            <person name="Ucla C."/>
            <person name="Antonarakis S.E."/>
            <person name="Long M."/>
            <person name="Emerson J.J."/>
            <person name="Betran E."/>
            <person name="Dupanloup I."/>
            <person name="Kaessmann H."/>
            <person name="Hinrichs A.S."/>
            <person name="Bejerano G."/>
            <person name="Furey T.S."/>
            <person name="Harte R.A."/>
            <person name="Raney B."/>
            <person name="Siepel A."/>
            <person name="Kent W.J."/>
            <person name="Haussler D."/>
            <person name="Eyras E."/>
            <person name="Castelo R."/>
            <person name="Abril J.F."/>
            <person name="Castellano S."/>
            <person name="Camara F."/>
            <person name="Parra G."/>
            <person name="Guigo R."/>
            <person name="Bourque G."/>
            <person name="Tesler G."/>
            <person name="Pevzner P.A."/>
            <person name="Smit A."/>
            <person name="Fulton L.A."/>
            <person name="Mardis E.R."/>
            <person name="Wilson R.K."/>
        </authorList>
    </citation>
    <scope>NUCLEOTIDE SEQUENCE [LARGE SCALE GENOMIC DNA]</scope>
    <source>
        <strain>Red jungle fowl</strain>
    </source>
</reference>
<reference key="2">
    <citation type="journal article" date="2013" name="Mol. Cell">
        <title>A cell cycle-dependent regulatory circuit composed of 53BP1-RIF1 and BRCA1-CtIP controls DNA repair pathway choice.</title>
        <authorList>
            <person name="Escribano-Diaz C."/>
            <person name="Orthwein A."/>
            <person name="Fradet-Turcotte A."/>
            <person name="Xing M."/>
            <person name="Young J.T."/>
            <person name="Tkac J."/>
            <person name="Cook M.A."/>
            <person name="Rosebrock A.P."/>
            <person name="Munro M."/>
            <person name="Canny M.D."/>
            <person name="Xu D."/>
            <person name="Durocher D."/>
        </authorList>
    </citation>
    <scope>FUNCTION</scope>
</reference>
<sequence>MSGTVSAAAGLRPLLETLQDPAAPAGDLTDAHLSLVNRLSGEEGREFVAAVRKHFPRLCKVFKAHISSENSELSNAALQALGFCVFNSKITSELSASEVEDLLSTLNSIAVKTSDKNTRTRALWVISKQTFPSEIIKKEVSSLISTLETILTKGDVQSMIVEYEALNVVIRLMEQAPAQMGEEAVRWAKLIIPLVVHSAHKVQLRGATALEIGMPLLLQKQQEVAAVTEHLMTTKLISELQKLFSTKNETYVLKLWPLFVKLLGKTLHRSGSFINSLLQLEELGFRSGSPVVKKIAFIAWKSLIDNFALNPDILCSAKRLKLLMQPLSSIHVRTEALALTKLEVWWYLLMRLGPQLPANFEQVCIPLIQSTLSVDSAAALQGTPSRVPSNPNSANPPQKPGPYPFASPATPRMNLNSSTAGLVAIPSIQLLGIEMLLHFLMGPEVLEFAKRNKLVLSLEPLQHPLISSPSFFCKHASTFINAVQDGFIAVGKEVPESMLNSIWKDINGHVKAAIESGNKKEKQGSEVLTMLLQALKNIVRSNSLPVQKILSLIDITVKELPPKVLGSPAYQIADMDLLNGTPALFLVQLPFHNNLLEWCVTDERFFIILETLMRYVLSGPTSLLAFSESVLCVINQNAKQVENKEHLWRMWSIVVNPLTDWINRTNEVNQGDALEHNFNAVYNALLLPVSHIFPVQEFPQPTMKSLLRAWSDLYRAFARCAALVATAEENLCCEELCAKIISGLEGETPVMSAMLDGLTHVVAVMVDCINFAPYGTKYQPKNRSPQTPTDWSKKKREPLGKLSSLFKLLVMLLDSFHALSSEETCPEPLASVGHSLIAVLHNIISHVSLPSMIGTMFAVFSKPLAVFYEKTKLADVPKAYSNLNSKLEKLLAEIILCLQSHCMGCYDSELLEQLSPLLCVIFQHKSKQMRKQCANFWNTTFAKAASLTYPEELKPVLSQAKQKMPLLLPGFESIEIADEQSGPFSDEAENSQWDAKLSGMEVNLGQKRDSILAQTGELKNEVKDKSDNVQVTSAKLKLEFSASKPKSDVLLEEEKSVDFVFIPPETKARILTEHQKEVLRSKRVGIPAMYNNLDSSQDTTLFSQYTQSQEDSLEKSPLENAKEDFKNNPQEENGKSESCIADSDGNTGDCKVDNPLEDVKEKSAYHIEKNSNSEEESSRGDRTGIIGEESSVGEALEKSGTETASKESLVGNENTSAISCSSTSSDVICGTPQPASRRQSFITLEKFDSSESRPFSPSALNSVSEVSQSAPVPDKQGNINVCKTGRKPGKSGEESRKSSQSEQISAAKRRLTRRQSKMEQQGNQQAKLVTNSEQEKGAQESFVSNSVENSPESPCSMEDTERVLTAQPQPVSSPEPDIKKAEAVMAEIEKVRAFEMDSKENTPPKTAVSSEQVMGDGSQGPHASLSQKTLRRSSRRRSENAEMAAGSQDKEDGYQKKDKRKEDEKALQKKVPQTKEDASQKQKAVCGKASEHAIKKESSLPERSAAEDLGSKEPPAAKGADEEANRSAGKPEDTLKSDSEGQDCSSDTVSEKKRERPRYHTRRSSQGLLSSIENAEADGSETKKESLKKKSGKTKNKSDSLEGKRKDVQPESQSHGVSSQVDESKNLSGMNESELSSEVSTDAALMSAPSDVKNQVLLAGADEAEGSASSRTSPSTQNVSVEQSKAGVLPESFSDPRVSDEVLKGDENKCIEKQSSVEQHSSVQPENVQGANTSGSDLSSLQMQDCQHKRSKRVRKAKSCDCCSKRVKQQTSLSESKSEDPRELIEPQATPVQMAVSTAEVSGSSNLEESLSITPCAMSTPLPPAKESGMLSLERERTGEDNLQGNSGVMKEEAENPAHTAGEVSDPVVEIKVKEEVDGNDRAEQCVSVSECASDEPSDSSVAAGDQSEEKAAVEKEEESQHGEMEEVPEADGSKPETKQMDELEGNRDGKEEAENALEEVCITPDNEMREELLEAEITVPENVAVGNKDVVVENKSADSPQKPEGLDSFTSVNGSPSGVQARCTWSPSASPSTSILKRGVKRHHEDDSLSPANKIRRVSFANPIYQEGLADDIDRRSPVIRSHSSPSSRSLKILSNIQTKHITTPTKGFLSPGSRNPKFKSSKKCLMTEMVKESLPSPTECVYPALAGCKAPVDVILPQITSNICARGLGQLIRAKNIKTVGDLSALTASEIKTLPIRSPKVSNVKKALRGYHEQQVKSRGCEEIGALEDGERTVNSAEDKSPPVDEEKLATDLGEAIALSSSSPPPADLLSQMDLLAAQLTSEDLRSYPGSRLFEMQEKLASMSDCIMKTLRSRWRSPPHDSAE</sequence>
<dbReference type="EMBL" id="AADN04023945">
    <property type="status" value="NOT_ANNOTATED_CDS"/>
    <property type="molecule type" value="Genomic_DNA"/>
</dbReference>
<dbReference type="RefSeq" id="XP_015145353.1">
    <property type="nucleotide sequence ID" value="XM_015289867.1"/>
</dbReference>
<dbReference type="RefSeq" id="XP_422162.4">
    <property type="nucleotide sequence ID" value="XM_422162.5"/>
</dbReference>
<dbReference type="FunCoup" id="E1C2U2">
    <property type="interactions" value="1934"/>
</dbReference>
<dbReference type="STRING" id="9031.ENSGALP00000036991"/>
<dbReference type="PaxDb" id="9031-ENSGALP00000036991"/>
<dbReference type="Ensembl" id="ENSGALT00000037786">
    <molecule id="E1C2U2-1"/>
    <property type="protein sequence ID" value="ENSGALP00000036991"/>
    <property type="gene ID" value="ENSGALG00000012484"/>
</dbReference>
<dbReference type="GeneID" id="424316"/>
<dbReference type="KEGG" id="gga:424316"/>
<dbReference type="CTD" id="55183"/>
<dbReference type="VEuPathDB" id="HostDB:geneid_424316"/>
<dbReference type="eggNOG" id="ENOG502QV6C">
    <property type="taxonomic scope" value="Eukaryota"/>
</dbReference>
<dbReference type="HOGENOM" id="CLU_000989_0_0_1"/>
<dbReference type="InParanoid" id="E1C2U2"/>
<dbReference type="OrthoDB" id="5399929at2759"/>
<dbReference type="TreeFam" id="TF323789"/>
<dbReference type="PRO" id="PR:E1C2U2"/>
<dbReference type="Proteomes" id="UP000000539">
    <property type="component" value="Unassembled WGS sequence"/>
</dbReference>
<dbReference type="GO" id="GO:0000781">
    <property type="term" value="C:chromosome, telomeric region"/>
    <property type="evidence" value="ECO:0007669"/>
    <property type="project" value="UniProtKB-SubCell"/>
</dbReference>
<dbReference type="GO" id="GO:0005737">
    <property type="term" value="C:cytoplasm"/>
    <property type="evidence" value="ECO:0007669"/>
    <property type="project" value="UniProtKB-KW"/>
</dbReference>
<dbReference type="GO" id="GO:0005634">
    <property type="term" value="C:nucleus"/>
    <property type="evidence" value="ECO:0007669"/>
    <property type="project" value="UniProtKB-SubCell"/>
</dbReference>
<dbReference type="GO" id="GO:0035861">
    <property type="term" value="C:site of double-strand break"/>
    <property type="evidence" value="ECO:0000250"/>
    <property type="project" value="UniProtKB"/>
</dbReference>
<dbReference type="GO" id="GO:0005819">
    <property type="term" value="C:spindle"/>
    <property type="evidence" value="ECO:0007669"/>
    <property type="project" value="UniProtKB-SubCell"/>
</dbReference>
<dbReference type="GO" id="GO:0006974">
    <property type="term" value="P:DNA damage response"/>
    <property type="evidence" value="ECO:0000250"/>
    <property type="project" value="UniProtKB"/>
</dbReference>
<dbReference type="GO" id="GO:0006281">
    <property type="term" value="P:DNA repair"/>
    <property type="evidence" value="ECO:0007669"/>
    <property type="project" value="UniProtKB-KW"/>
</dbReference>
<dbReference type="GO" id="GO:2000042">
    <property type="term" value="P:negative regulation of double-strand break repair via homologous recombination"/>
    <property type="evidence" value="ECO:0000250"/>
    <property type="project" value="UniProtKB"/>
</dbReference>
<dbReference type="GO" id="GO:2001034">
    <property type="term" value="P:positive regulation of double-strand break repair via nonhomologous end joining"/>
    <property type="evidence" value="ECO:0000315"/>
    <property type="project" value="UniProtKB"/>
</dbReference>
<dbReference type="GO" id="GO:0045830">
    <property type="term" value="P:positive regulation of isotype switching"/>
    <property type="evidence" value="ECO:0000250"/>
    <property type="project" value="UniProtKB"/>
</dbReference>
<dbReference type="CDD" id="cd14267">
    <property type="entry name" value="Rif1_CTD_C-II_like"/>
    <property type="match status" value="1"/>
</dbReference>
<dbReference type="InterPro" id="IPR016024">
    <property type="entry name" value="ARM-type_fold"/>
</dbReference>
<dbReference type="InterPro" id="IPR022031">
    <property type="entry name" value="Rif1_N"/>
</dbReference>
<dbReference type="PANTHER" id="PTHR22928">
    <property type="entry name" value="TELOMERE-ASSOCIATED PROTEIN RIF1"/>
    <property type="match status" value="1"/>
</dbReference>
<dbReference type="PANTHER" id="PTHR22928:SF3">
    <property type="entry name" value="TELOMERE-ASSOCIATED PROTEIN RIF1"/>
    <property type="match status" value="1"/>
</dbReference>
<dbReference type="Pfam" id="PF12231">
    <property type="entry name" value="Rif1_N"/>
    <property type="match status" value="1"/>
</dbReference>
<dbReference type="SUPFAM" id="SSF48371">
    <property type="entry name" value="ARM repeat"/>
    <property type="match status" value="1"/>
</dbReference>
<proteinExistence type="inferred from homology"/>
<comment type="function">
    <text evidence="1 2 4">Key regulator of TP53BP1 that plays a key role in the repair of double-strand DNA breaks (DSBs) in response to DNA damage: acts by promoting non-homologous end joining (NHEJ)-mediated repair of DSBs (PubMed:23333306). In response to DNA damage, interacts with ATM-phosphorylated TP53BP1, allowing recruitment to DNA DSBs (By similarity). Once recruited to DSBs, RIF1 and TP53BP1 act by promoting NHEJ-mediated repair of DSBs (PubMed:23333306). In the same time, RIF1 and TP53BP1 specifically counteract DSBs resection via homologous recombination (HR) during G1 phase (By similarity).</text>
</comment>
<comment type="subunit">
    <text evidence="2">Interacts with TP53BP1 (when phosphorylated by ATM).</text>
</comment>
<comment type="subcellular location">
    <subcellularLocation>
        <location evidence="2">Nucleus</location>
    </subcellularLocation>
    <subcellularLocation>
        <location evidence="2">Chromosome</location>
    </subcellularLocation>
    <subcellularLocation>
        <location evidence="2">Chromosome</location>
        <location evidence="2">Telomere</location>
    </subcellularLocation>
    <subcellularLocation>
        <location evidence="1">Cytoplasm</location>
        <location evidence="1">Cytoskeleton</location>
        <location evidence="1">Spindle</location>
    </subcellularLocation>
    <text evidence="1 2">Following interaction with TP53BP1, recruited to sites of DNA damage, such as double-strand DNA breaks (DSBs).</text>
</comment>
<comment type="alternative products">
    <event type="alternative splicing"/>
    <isoform>
        <id>E1C2U2-1</id>
        <name>1</name>
        <sequence type="displayed"/>
    </isoform>
    <isoform>
        <id>E1C2U2-2</id>
        <name>2</name>
        <sequence type="described" ref="VSP_058928"/>
    </isoform>
</comment>
<comment type="similarity">
    <text evidence="5">Belongs to the RIF1 family.</text>
</comment>
<evidence type="ECO:0000250" key="1">
    <source>
        <dbReference type="UniProtKB" id="Q5UIP0"/>
    </source>
</evidence>
<evidence type="ECO:0000250" key="2">
    <source>
        <dbReference type="UniProtKB" id="Q6PR54"/>
    </source>
</evidence>
<evidence type="ECO:0000256" key="3">
    <source>
        <dbReference type="SAM" id="MobiDB-lite"/>
    </source>
</evidence>
<evidence type="ECO:0000269" key="4">
    <source>
    </source>
</evidence>
<evidence type="ECO:0000305" key="5"/>
<accession>E1C2U2</accession>
<accession>A0A1D5PUQ3</accession>
<organism>
    <name type="scientific">Gallus gallus</name>
    <name type="common">Chicken</name>
    <dbReference type="NCBI Taxonomy" id="9031"/>
    <lineage>
        <taxon>Eukaryota</taxon>
        <taxon>Metazoa</taxon>
        <taxon>Chordata</taxon>
        <taxon>Craniata</taxon>
        <taxon>Vertebrata</taxon>
        <taxon>Euteleostomi</taxon>
        <taxon>Archelosauria</taxon>
        <taxon>Archosauria</taxon>
        <taxon>Dinosauria</taxon>
        <taxon>Saurischia</taxon>
        <taxon>Theropoda</taxon>
        <taxon>Coelurosauria</taxon>
        <taxon>Aves</taxon>
        <taxon>Neognathae</taxon>
        <taxon>Galloanserae</taxon>
        <taxon>Galliformes</taxon>
        <taxon>Phasianidae</taxon>
        <taxon>Phasianinae</taxon>
        <taxon>Gallus</taxon>
    </lineage>
</organism>
<name>RIF1_CHICK</name>
<keyword id="KW-0025">Alternative splicing</keyword>
<keyword id="KW-0131">Cell cycle</keyword>
<keyword id="KW-0158">Chromosome</keyword>
<keyword id="KW-0963">Cytoplasm</keyword>
<keyword id="KW-0206">Cytoskeleton</keyword>
<keyword id="KW-0227">DNA damage</keyword>
<keyword id="KW-0234">DNA repair</keyword>
<keyword id="KW-0539">Nucleus</keyword>
<keyword id="KW-1185">Reference proteome</keyword>
<keyword id="KW-0779">Telomere</keyword>